<reference key="1">
    <citation type="journal article" date="2009" name="Infect. Immun.">
        <title>Comparative genomics reveal extensive transposon-mediated genomic plasticity and diversity among potential effector proteins within the genus Coxiella.</title>
        <authorList>
            <person name="Beare P.A."/>
            <person name="Unsworth N."/>
            <person name="Andoh M."/>
            <person name="Voth D.E."/>
            <person name="Omsland A."/>
            <person name="Gilk S.D."/>
            <person name="Williams K.P."/>
            <person name="Sobral B.W."/>
            <person name="Kupko J.J. III"/>
            <person name="Porcella S.F."/>
            <person name="Samuel J.E."/>
            <person name="Heinzen R.A."/>
        </authorList>
    </citation>
    <scope>NUCLEOTIDE SEQUENCE [LARGE SCALE GENOMIC DNA]</scope>
    <source>
        <strain>Dugway 5J108-111</strain>
    </source>
</reference>
<protein>
    <recommendedName>
        <fullName evidence="1">Protein-export protein SecB</fullName>
    </recommendedName>
</protein>
<sequence>MAEQNQRTNTPDNGPEFAIQRLYIKDLSFEAPRSPQVFLEEWQPELNMDLATKVNDLGEDNHEVVLTVTVTVTMKESHIFLAEVQQGGIFTIKNFPKEEMRPMLGSFCPNILYPYAREAITDMVVRGGFPQLYLAPVNFDALFEQHEQSEEGNSGTEDRVH</sequence>
<organism>
    <name type="scientific">Coxiella burnetii (strain Dugway 5J108-111)</name>
    <dbReference type="NCBI Taxonomy" id="434922"/>
    <lineage>
        <taxon>Bacteria</taxon>
        <taxon>Pseudomonadati</taxon>
        <taxon>Pseudomonadota</taxon>
        <taxon>Gammaproteobacteria</taxon>
        <taxon>Legionellales</taxon>
        <taxon>Coxiellaceae</taxon>
        <taxon>Coxiella</taxon>
    </lineage>
</organism>
<feature type="chain" id="PRO_1000083854" description="Protein-export protein SecB">
    <location>
        <begin position="1"/>
        <end position="161"/>
    </location>
</feature>
<comment type="function">
    <text evidence="1">One of the proteins required for the normal export of preproteins out of the cell cytoplasm. It is a molecular chaperone that binds to a subset of precursor proteins, maintaining them in a translocation-competent state. It also specifically binds to its receptor SecA.</text>
</comment>
<comment type="subunit">
    <text evidence="1">Homotetramer, a dimer of dimers. One homotetramer interacts with 1 SecA dimer.</text>
</comment>
<comment type="subcellular location">
    <subcellularLocation>
        <location evidence="1">Cytoplasm</location>
    </subcellularLocation>
</comment>
<comment type="similarity">
    <text evidence="1">Belongs to the SecB family.</text>
</comment>
<proteinExistence type="inferred from homology"/>
<gene>
    <name evidence="1" type="primary">secB</name>
    <name type="ordered locus">CBUD_0465</name>
</gene>
<dbReference type="EMBL" id="CP000733">
    <property type="protein sequence ID" value="ABS76522.1"/>
    <property type="molecule type" value="Genomic_DNA"/>
</dbReference>
<dbReference type="RefSeq" id="WP_005772050.1">
    <property type="nucleotide sequence ID" value="NC_009727.1"/>
</dbReference>
<dbReference type="SMR" id="A9KF84"/>
<dbReference type="KEGG" id="cbd:CBUD_0465"/>
<dbReference type="HOGENOM" id="CLU_111574_1_0_6"/>
<dbReference type="Proteomes" id="UP000008555">
    <property type="component" value="Chromosome"/>
</dbReference>
<dbReference type="GO" id="GO:0005737">
    <property type="term" value="C:cytoplasm"/>
    <property type="evidence" value="ECO:0007669"/>
    <property type="project" value="UniProtKB-SubCell"/>
</dbReference>
<dbReference type="GO" id="GO:0051082">
    <property type="term" value="F:unfolded protein binding"/>
    <property type="evidence" value="ECO:0007669"/>
    <property type="project" value="InterPro"/>
</dbReference>
<dbReference type="GO" id="GO:0006457">
    <property type="term" value="P:protein folding"/>
    <property type="evidence" value="ECO:0007669"/>
    <property type="project" value="UniProtKB-UniRule"/>
</dbReference>
<dbReference type="GO" id="GO:0051262">
    <property type="term" value="P:protein tetramerization"/>
    <property type="evidence" value="ECO:0007669"/>
    <property type="project" value="InterPro"/>
</dbReference>
<dbReference type="GO" id="GO:0015031">
    <property type="term" value="P:protein transport"/>
    <property type="evidence" value="ECO:0007669"/>
    <property type="project" value="UniProtKB-UniRule"/>
</dbReference>
<dbReference type="Gene3D" id="3.10.420.10">
    <property type="entry name" value="SecB-like"/>
    <property type="match status" value="1"/>
</dbReference>
<dbReference type="HAMAP" id="MF_00821">
    <property type="entry name" value="SecB"/>
    <property type="match status" value="1"/>
</dbReference>
<dbReference type="InterPro" id="IPR003708">
    <property type="entry name" value="SecB"/>
</dbReference>
<dbReference type="InterPro" id="IPR035958">
    <property type="entry name" value="SecB-like_sf"/>
</dbReference>
<dbReference type="NCBIfam" id="NF004393">
    <property type="entry name" value="PRK05751.1-4"/>
    <property type="match status" value="1"/>
</dbReference>
<dbReference type="NCBIfam" id="TIGR00809">
    <property type="entry name" value="secB"/>
    <property type="match status" value="1"/>
</dbReference>
<dbReference type="PANTHER" id="PTHR36918">
    <property type="match status" value="1"/>
</dbReference>
<dbReference type="PANTHER" id="PTHR36918:SF1">
    <property type="entry name" value="PROTEIN-EXPORT PROTEIN SECB"/>
    <property type="match status" value="1"/>
</dbReference>
<dbReference type="Pfam" id="PF02556">
    <property type="entry name" value="SecB"/>
    <property type="match status" value="1"/>
</dbReference>
<dbReference type="PRINTS" id="PR01594">
    <property type="entry name" value="SECBCHAPRONE"/>
</dbReference>
<dbReference type="SUPFAM" id="SSF54611">
    <property type="entry name" value="SecB-like"/>
    <property type="match status" value="1"/>
</dbReference>
<name>SECB_COXBN</name>
<keyword id="KW-0143">Chaperone</keyword>
<keyword id="KW-0963">Cytoplasm</keyword>
<keyword id="KW-0653">Protein transport</keyword>
<keyword id="KW-0811">Translocation</keyword>
<keyword id="KW-0813">Transport</keyword>
<accession>A9KF84</accession>
<evidence type="ECO:0000255" key="1">
    <source>
        <dbReference type="HAMAP-Rule" id="MF_00821"/>
    </source>
</evidence>